<proteinExistence type="evidence at transcript level"/>
<keyword id="KW-1015">Disulfide bond</keyword>
<keyword id="KW-0325">Glycoprotein</keyword>
<keyword id="KW-0472">Membrane</keyword>
<keyword id="KW-1185">Reference proteome</keyword>
<keyword id="KW-0812">Transmembrane</keyword>
<keyword id="KW-1133">Transmembrane helix</keyword>
<dbReference type="EMBL" id="AF255741">
    <property type="protein sequence ID" value="AAG16682.1"/>
    <property type="status" value="ALT_FRAME"/>
    <property type="molecule type" value="mRNA"/>
</dbReference>
<dbReference type="EMBL" id="AE014296">
    <property type="protein sequence ID" value="AAF51810.4"/>
    <property type="molecule type" value="Genomic_DNA"/>
</dbReference>
<dbReference type="EMBL" id="BT011070">
    <property type="protein sequence ID" value="AAR31141.1"/>
    <property type="molecule type" value="mRNA"/>
</dbReference>
<dbReference type="RefSeq" id="NP_001262204.1">
    <property type="nucleotide sequence ID" value="NM_001275275.1"/>
</dbReference>
<dbReference type="RefSeq" id="NP_730711.3">
    <property type="nucleotide sequence ID" value="NM_168948.5"/>
</dbReference>
<dbReference type="SMR" id="Q6NP60"/>
<dbReference type="BioGRID" id="65692">
    <property type="interactions" value="3"/>
</dbReference>
<dbReference type="FunCoup" id="Q6NP60">
    <property type="interactions" value="4"/>
</dbReference>
<dbReference type="IntAct" id="Q6NP60">
    <property type="interactions" value="30"/>
</dbReference>
<dbReference type="STRING" id="7227.FBpp0305421"/>
<dbReference type="GlyCosmos" id="Q6NP60">
    <property type="glycosylation" value="4 sites, No reported glycans"/>
</dbReference>
<dbReference type="GlyGen" id="Q6NP60">
    <property type="glycosylation" value="4 sites"/>
</dbReference>
<dbReference type="PaxDb" id="7227-FBpp0305421"/>
<dbReference type="DNASU" id="40453"/>
<dbReference type="EnsemblMetazoa" id="FBtr0301492">
    <property type="protein sequence ID" value="FBpp0290707"/>
    <property type="gene ID" value="FBgn0037153"/>
</dbReference>
<dbReference type="EnsemblMetazoa" id="FBtr0333219">
    <property type="protein sequence ID" value="FBpp0305421"/>
    <property type="gene ID" value="FBgn0037153"/>
</dbReference>
<dbReference type="GeneID" id="40453"/>
<dbReference type="KEGG" id="dme:Dmel_CG12673"/>
<dbReference type="AGR" id="FB:FBgn0037153"/>
<dbReference type="CTD" id="40453"/>
<dbReference type="FlyBase" id="FBgn0037153">
    <property type="gene designation" value="olf413"/>
</dbReference>
<dbReference type="VEuPathDB" id="VectorBase:FBgn0037153"/>
<dbReference type="eggNOG" id="KOG3568">
    <property type="taxonomic scope" value="Eukaryota"/>
</dbReference>
<dbReference type="GeneTree" id="ENSGT00530000063085"/>
<dbReference type="HOGENOM" id="CLU_017939_2_0_1"/>
<dbReference type="InParanoid" id="Q6NP60"/>
<dbReference type="OMA" id="YKKHKRC"/>
<dbReference type="OrthoDB" id="19261at2759"/>
<dbReference type="PhylomeDB" id="Q6NP60"/>
<dbReference type="SignaLink" id="Q6NP60"/>
<dbReference type="BioGRID-ORCS" id="40453">
    <property type="hits" value="0 hits in 1 CRISPR screen"/>
</dbReference>
<dbReference type="ChiTaRS" id="olf413">
    <property type="organism name" value="fly"/>
</dbReference>
<dbReference type="GenomeRNAi" id="40453"/>
<dbReference type="PRO" id="PR:Q6NP60"/>
<dbReference type="Proteomes" id="UP000000803">
    <property type="component" value="Chromosome 3L"/>
</dbReference>
<dbReference type="Bgee" id="FBgn0037153">
    <property type="expression patterns" value="Expressed in optic-lobe-associated cortex glial cell in insect head and 151 other cell types or tissues"/>
</dbReference>
<dbReference type="ExpressionAtlas" id="Q6NP60">
    <property type="expression patterns" value="baseline and differential"/>
</dbReference>
<dbReference type="GO" id="GO:0005829">
    <property type="term" value="C:cytosol"/>
    <property type="evidence" value="ECO:0007005"/>
    <property type="project" value="FlyBase"/>
</dbReference>
<dbReference type="GO" id="GO:0005615">
    <property type="term" value="C:extracellular space"/>
    <property type="evidence" value="ECO:0000250"/>
    <property type="project" value="FlyBase"/>
</dbReference>
<dbReference type="GO" id="GO:0030667">
    <property type="term" value="C:secretory granule membrane"/>
    <property type="evidence" value="ECO:0000318"/>
    <property type="project" value="GO_Central"/>
</dbReference>
<dbReference type="GO" id="GO:0005507">
    <property type="term" value="F:copper ion binding"/>
    <property type="evidence" value="ECO:0000318"/>
    <property type="project" value="GO_Central"/>
</dbReference>
<dbReference type="GO" id="GO:0004500">
    <property type="term" value="F:dopamine beta-monooxygenase activity"/>
    <property type="evidence" value="ECO:0000318"/>
    <property type="project" value="GO_Central"/>
</dbReference>
<dbReference type="GO" id="GO:0042420">
    <property type="term" value="P:dopamine catabolic process"/>
    <property type="evidence" value="ECO:0000318"/>
    <property type="project" value="GO_Central"/>
</dbReference>
<dbReference type="GO" id="GO:0042421">
    <property type="term" value="P:norepinephrine biosynthetic process"/>
    <property type="evidence" value="ECO:0000318"/>
    <property type="project" value="GO_Central"/>
</dbReference>
<dbReference type="GO" id="GO:0006589">
    <property type="term" value="P:octopamine biosynthetic process"/>
    <property type="evidence" value="ECO:0000318"/>
    <property type="project" value="GO_Central"/>
</dbReference>
<dbReference type="CDD" id="cd09631">
    <property type="entry name" value="DOMON_DOH"/>
    <property type="match status" value="1"/>
</dbReference>
<dbReference type="FunFam" id="2.60.120.230:FF:000001">
    <property type="entry name" value="Monooxygenase, DBH-like 1"/>
    <property type="match status" value="1"/>
</dbReference>
<dbReference type="FunFam" id="2.60.120.310:FF:000007">
    <property type="entry name" value="MOXD1 homolog 2"/>
    <property type="match status" value="1"/>
</dbReference>
<dbReference type="FunFam" id="2.60.40.1210:FF:000002">
    <property type="entry name" value="MOXD1 homolog 2"/>
    <property type="match status" value="1"/>
</dbReference>
<dbReference type="Gene3D" id="2.60.120.230">
    <property type="match status" value="1"/>
</dbReference>
<dbReference type="Gene3D" id="2.60.40.1210">
    <property type="entry name" value="Cellobiose dehydrogenase, cytochrome domain"/>
    <property type="match status" value="1"/>
</dbReference>
<dbReference type="Gene3D" id="2.60.120.310">
    <property type="entry name" value="Copper type II, ascorbate-dependent monooxygenase, N-terminal domain"/>
    <property type="match status" value="1"/>
</dbReference>
<dbReference type="InterPro" id="IPR014784">
    <property type="entry name" value="Cu2_ascorb_mOase-like_C"/>
</dbReference>
<dbReference type="InterPro" id="IPR000323">
    <property type="entry name" value="Cu2_ascorb_mOase_N"/>
</dbReference>
<dbReference type="InterPro" id="IPR036939">
    <property type="entry name" value="Cu2_ascorb_mOase_N_sf"/>
</dbReference>
<dbReference type="InterPro" id="IPR024548">
    <property type="entry name" value="Cu2_monoox_C"/>
</dbReference>
<dbReference type="InterPro" id="IPR000945">
    <property type="entry name" value="DBH-like"/>
</dbReference>
<dbReference type="InterPro" id="IPR045266">
    <property type="entry name" value="DOH_DOMON"/>
</dbReference>
<dbReference type="InterPro" id="IPR005018">
    <property type="entry name" value="DOMON_domain"/>
</dbReference>
<dbReference type="InterPro" id="IPR008977">
    <property type="entry name" value="PHM/PNGase_F_dom_sf"/>
</dbReference>
<dbReference type="InterPro" id="IPR028460">
    <property type="entry name" value="Tbh/DBH"/>
</dbReference>
<dbReference type="PANTHER" id="PTHR10157">
    <property type="entry name" value="DOPAMINE BETA HYDROXYLASE RELATED"/>
    <property type="match status" value="1"/>
</dbReference>
<dbReference type="PANTHER" id="PTHR10157:SF40">
    <property type="entry name" value="MOXD1 HOMOLOG 2"/>
    <property type="match status" value="1"/>
</dbReference>
<dbReference type="Pfam" id="PF03712">
    <property type="entry name" value="Cu2_monoox_C"/>
    <property type="match status" value="1"/>
</dbReference>
<dbReference type="Pfam" id="PF01082">
    <property type="entry name" value="Cu2_monooxygen"/>
    <property type="match status" value="1"/>
</dbReference>
<dbReference type="Pfam" id="PF03351">
    <property type="entry name" value="DOMON"/>
    <property type="match status" value="1"/>
</dbReference>
<dbReference type="PRINTS" id="PR00767">
    <property type="entry name" value="DBMONOXGNASE"/>
</dbReference>
<dbReference type="SMART" id="SM00664">
    <property type="entry name" value="DoH"/>
    <property type="match status" value="1"/>
</dbReference>
<dbReference type="SUPFAM" id="SSF49344">
    <property type="entry name" value="CBD9-like"/>
    <property type="match status" value="1"/>
</dbReference>
<dbReference type="SUPFAM" id="SSF49742">
    <property type="entry name" value="PHM/PNGase F"/>
    <property type="match status" value="2"/>
</dbReference>
<dbReference type="PROSITE" id="PS50836">
    <property type="entry name" value="DOMON"/>
    <property type="match status" value="1"/>
</dbReference>
<feature type="chain" id="PRO_0000305222" description="MOXD1 homolog 2">
    <location>
        <begin position="1"/>
        <end position="760"/>
    </location>
</feature>
<feature type="transmembrane region" description="Helical" evidence="2">
    <location>
        <begin position="47"/>
        <end position="67"/>
    </location>
</feature>
<feature type="transmembrane region" description="Helical" evidence="2">
    <location>
        <begin position="740"/>
        <end position="760"/>
    </location>
</feature>
<feature type="domain" description="DOMON" evidence="3">
    <location>
        <begin position="117"/>
        <end position="233"/>
    </location>
</feature>
<feature type="region of interest" description="Disordered" evidence="4">
    <location>
        <begin position="1"/>
        <end position="34"/>
    </location>
</feature>
<feature type="region of interest" description="Disordered" evidence="4">
    <location>
        <begin position="678"/>
        <end position="701"/>
    </location>
</feature>
<feature type="compositionally biased region" description="Low complexity" evidence="4">
    <location>
        <begin position="18"/>
        <end position="34"/>
    </location>
</feature>
<feature type="glycosylation site" description="N-linked (GlcNAc...) asparagine" evidence="2">
    <location>
        <position position="78"/>
    </location>
</feature>
<feature type="glycosylation site" description="N-linked (GlcNAc...) asparagine" evidence="2">
    <location>
        <position position="198"/>
    </location>
</feature>
<feature type="glycosylation site" description="N-linked (GlcNAc...) asparagine" evidence="2">
    <location>
        <position position="223"/>
    </location>
</feature>
<feature type="glycosylation site" description="N-linked (GlcNAc...) asparagine" evidence="2">
    <location>
        <position position="668"/>
    </location>
</feature>
<feature type="disulfide bond" evidence="1">
    <location>
        <begin position="339"/>
        <end position="367"/>
    </location>
</feature>
<feature type="disulfide bond" evidence="1">
    <location>
        <begin position="467"/>
        <end position="581"/>
    </location>
</feature>
<feature type="disulfide bond" evidence="1">
    <location>
        <begin position="543"/>
        <end position="565"/>
    </location>
</feature>
<feature type="sequence conflict" description="In Ref. 1; AAG16682." evidence="5" ref="1">
    <original>Q</original>
    <variation>H</variation>
    <location>
        <position position="598"/>
    </location>
</feature>
<feature type="sequence conflict" description="In Ref. 1; AAG16682." evidence="5" ref="1">
    <original>VP</original>
    <variation>LLFITPQ</variation>
    <location>
        <begin position="656"/>
        <end position="657"/>
    </location>
</feature>
<sequence length="760" mass="84741">MAHPRKAVATPATLQLGPPAQTAQSPAATLRHSRTASSSRRLSLIRCFISCHTFNLFLLLLLLASGVRAASKLATRSNKTSGSSTASGVGAGTAATSAAAAAASGTPIWDHAIDLNDDFRILWQIINQDITFEIQARTLGYVGFGFSPDGNLAGADMAIGWVDKGQTYFQDRHVTRNGDPEPVVDPSQDYMLMLGYENATHTVLRFRRKLDTCDPSHDIAITNDTMRLLYMYHAQDPPHGSVRPGTLPDPARAFRPYRPMVLMQRAQLPMPSPTHDERVRVLELRNEDVELPAGDLPLFWCKMFKLEDINRKHHLIRYEPIYDSSSSVHYLQHITLHECQGAHAELEEMAREQGRPCLGARSIPLACNAIVASWSRGSEGFTYPHEAGYPIESRQAKYYLMETHYNNLKPDFAQLHARQMADNSGLKIYFTHVLRPNDAGTLSIGMDPNWRHIIPPGQKRVVSEGQCIEDCTGYAFPQQGINIFAVMMRTHQIGKEVKLRQIRQTEELPPIAHDSNIDVAYQDFRRLPQSVHSMPGDRLIAECIYDSSSRKAITLGGLTMKEESCTVLTLYYPRQKKLTTCHSLPSLPTVLHSLGIEQLATDSNPVLISSPPELAGMTLEARLISYDWENQFGEFQEATRKGSFKPICWGAKNHVVPGSEFLEGYSINVTKTYKKHRRCKPKRPLAPPTERTAPPPASDLSELPVLHELDNNNIIEGAARSSRSSATDVHSLSRGSGRHFISCLLWLGASSWWLLLMLRT</sequence>
<comment type="subcellular location">
    <subcellularLocation>
        <location evidence="5">Membrane</location>
        <topology evidence="5">Multi-pass membrane protein</topology>
    </subcellularLocation>
</comment>
<comment type="similarity">
    <text evidence="5">Belongs to the copper type II ascorbate-dependent monooxygenase family.</text>
</comment>
<comment type="sequence caution" evidence="5">
    <conflict type="frameshift">
        <sequence resource="EMBL-CDS" id="AAG16682"/>
    </conflict>
</comment>
<evidence type="ECO:0000250" key="1"/>
<evidence type="ECO:0000255" key="2"/>
<evidence type="ECO:0000255" key="3">
    <source>
        <dbReference type="PROSITE-ProRule" id="PRU00246"/>
    </source>
</evidence>
<evidence type="ECO:0000256" key="4">
    <source>
        <dbReference type="SAM" id="MobiDB-lite"/>
    </source>
</evidence>
<evidence type="ECO:0000305" key="5"/>
<protein>
    <recommendedName>
        <fullName>MOXD1 homolog 2</fullName>
    </recommendedName>
</protein>
<accession>Q6NP60</accession>
<accession>Q9GTU8</accession>
<accession>Q9VNV6</accession>
<organism>
    <name type="scientific">Drosophila melanogaster</name>
    <name type="common">Fruit fly</name>
    <dbReference type="NCBI Taxonomy" id="7227"/>
    <lineage>
        <taxon>Eukaryota</taxon>
        <taxon>Metazoa</taxon>
        <taxon>Ecdysozoa</taxon>
        <taxon>Arthropoda</taxon>
        <taxon>Hexapoda</taxon>
        <taxon>Insecta</taxon>
        <taxon>Pterygota</taxon>
        <taxon>Neoptera</taxon>
        <taxon>Endopterygota</taxon>
        <taxon>Diptera</taxon>
        <taxon>Brachycera</taxon>
        <taxon>Muscomorpha</taxon>
        <taxon>Ephydroidea</taxon>
        <taxon>Drosophilidae</taxon>
        <taxon>Drosophila</taxon>
        <taxon>Sophophora</taxon>
    </lineage>
</organism>
<reference key="1">
    <citation type="thesis" date="2000" institute="Manipal Academy of Higher Education" country="India">
        <title>Characterization of olf413 - an olfactory mutation in Drosophila melanogaster.</title>
        <authorList>
            <person name="Tickoo S."/>
        </authorList>
    </citation>
    <scope>NUCLEOTIDE SEQUENCE [MRNA]</scope>
</reference>
<reference key="2">
    <citation type="journal article" date="2000" name="Science">
        <title>The genome sequence of Drosophila melanogaster.</title>
        <authorList>
            <person name="Adams M.D."/>
            <person name="Celniker S.E."/>
            <person name="Holt R.A."/>
            <person name="Evans C.A."/>
            <person name="Gocayne J.D."/>
            <person name="Amanatides P.G."/>
            <person name="Scherer S.E."/>
            <person name="Li P.W."/>
            <person name="Hoskins R.A."/>
            <person name="Galle R.F."/>
            <person name="George R.A."/>
            <person name="Lewis S.E."/>
            <person name="Richards S."/>
            <person name="Ashburner M."/>
            <person name="Henderson S.N."/>
            <person name="Sutton G.G."/>
            <person name="Wortman J.R."/>
            <person name="Yandell M.D."/>
            <person name="Zhang Q."/>
            <person name="Chen L.X."/>
            <person name="Brandon R.C."/>
            <person name="Rogers Y.-H.C."/>
            <person name="Blazej R.G."/>
            <person name="Champe M."/>
            <person name="Pfeiffer B.D."/>
            <person name="Wan K.H."/>
            <person name="Doyle C."/>
            <person name="Baxter E.G."/>
            <person name="Helt G."/>
            <person name="Nelson C.R."/>
            <person name="Miklos G.L.G."/>
            <person name="Abril J.F."/>
            <person name="Agbayani A."/>
            <person name="An H.-J."/>
            <person name="Andrews-Pfannkoch C."/>
            <person name="Baldwin D."/>
            <person name="Ballew R.M."/>
            <person name="Basu A."/>
            <person name="Baxendale J."/>
            <person name="Bayraktaroglu L."/>
            <person name="Beasley E.M."/>
            <person name="Beeson K.Y."/>
            <person name="Benos P.V."/>
            <person name="Berman B.P."/>
            <person name="Bhandari D."/>
            <person name="Bolshakov S."/>
            <person name="Borkova D."/>
            <person name="Botchan M.R."/>
            <person name="Bouck J."/>
            <person name="Brokstein P."/>
            <person name="Brottier P."/>
            <person name="Burtis K.C."/>
            <person name="Busam D.A."/>
            <person name="Butler H."/>
            <person name="Cadieu E."/>
            <person name="Center A."/>
            <person name="Chandra I."/>
            <person name="Cherry J.M."/>
            <person name="Cawley S."/>
            <person name="Dahlke C."/>
            <person name="Davenport L.B."/>
            <person name="Davies P."/>
            <person name="de Pablos B."/>
            <person name="Delcher A."/>
            <person name="Deng Z."/>
            <person name="Mays A.D."/>
            <person name="Dew I."/>
            <person name="Dietz S.M."/>
            <person name="Dodson K."/>
            <person name="Doup L.E."/>
            <person name="Downes M."/>
            <person name="Dugan-Rocha S."/>
            <person name="Dunkov B.C."/>
            <person name="Dunn P."/>
            <person name="Durbin K.J."/>
            <person name="Evangelista C.C."/>
            <person name="Ferraz C."/>
            <person name="Ferriera S."/>
            <person name="Fleischmann W."/>
            <person name="Fosler C."/>
            <person name="Gabrielian A.E."/>
            <person name="Garg N.S."/>
            <person name="Gelbart W.M."/>
            <person name="Glasser K."/>
            <person name="Glodek A."/>
            <person name="Gong F."/>
            <person name="Gorrell J.H."/>
            <person name="Gu Z."/>
            <person name="Guan P."/>
            <person name="Harris M."/>
            <person name="Harris N.L."/>
            <person name="Harvey D.A."/>
            <person name="Heiman T.J."/>
            <person name="Hernandez J.R."/>
            <person name="Houck J."/>
            <person name="Hostin D."/>
            <person name="Houston K.A."/>
            <person name="Howland T.J."/>
            <person name="Wei M.-H."/>
            <person name="Ibegwam C."/>
            <person name="Jalali M."/>
            <person name="Kalush F."/>
            <person name="Karpen G.H."/>
            <person name="Ke Z."/>
            <person name="Kennison J.A."/>
            <person name="Ketchum K.A."/>
            <person name="Kimmel B.E."/>
            <person name="Kodira C.D."/>
            <person name="Kraft C.L."/>
            <person name="Kravitz S."/>
            <person name="Kulp D."/>
            <person name="Lai Z."/>
            <person name="Lasko P."/>
            <person name="Lei Y."/>
            <person name="Levitsky A.A."/>
            <person name="Li J.H."/>
            <person name="Li Z."/>
            <person name="Liang Y."/>
            <person name="Lin X."/>
            <person name="Liu X."/>
            <person name="Mattei B."/>
            <person name="McIntosh T.C."/>
            <person name="McLeod M.P."/>
            <person name="McPherson D."/>
            <person name="Merkulov G."/>
            <person name="Milshina N.V."/>
            <person name="Mobarry C."/>
            <person name="Morris J."/>
            <person name="Moshrefi A."/>
            <person name="Mount S.M."/>
            <person name="Moy M."/>
            <person name="Murphy B."/>
            <person name="Murphy L."/>
            <person name="Muzny D.M."/>
            <person name="Nelson D.L."/>
            <person name="Nelson D.R."/>
            <person name="Nelson K.A."/>
            <person name="Nixon K."/>
            <person name="Nusskern D.R."/>
            <person name="Pacleb J.M."/>
            <person name="Palazzolo M."/>
            <person name="Pittman G.S."/>
            <person name="Pan S."/>
            <person name="Pollard J."/>
            <person name="Puri V."/>
            <person name="Reese M.G."/>
            <person name="Reinert K."/>
            <person name="Remington K."/>
            <person name="Saunders R.D.C."/>
            <person name="Scheeler F."/>
            <person name="Shen H."/>
            <person name="Shue B.C."/>
            <person name="Siden-Kiamos I."/>
            <person name="Simpson M."/>
            <person name="Skupski M.P."/>
            <person name="Smith T.J."/>
            <person name="Spier E."/>
            <person name="Spradling A.C."/>
            <person name="Stapleton M."/>
            <person name="Strong R."/>
            <person name="Sun E."/>
            <person name="Svirskas R."/>
            <person name="Tector C."/>
            <person name="Turner R."/>
            <person name="Venter E."/>
            <person name="Wang A.H."/>
            <person name="Wang X."/>
            <person name="Wang Z.-Y."/>
            <person name="Wassarman D.A."/>
            <person name="Weinstock G.M."/>
            <person name="Weissenbach J."/>
            <person name="Williams S.M."/>
            <person name="Woodage T."/>
            <person name="Worley K.C."/>
            <person name="Wu D."/>
            <person name="Yang S."/>
            <person name="Yao Q.A."/>
            <person name="Ye J."/>
            <person name="Yeh R.-F."/>
            <person name="Zaveri J.S."/>
            <person name="Zhan M."/>
            <person name="Zhang G."/>
            <person name="Zhao Q."/>
            <person name="Zheng L."/>
            <person name="Zheng X.H."/>
            <person name="Zhong F.N."/>
            <person name="Zhong W."/>
            <person name="Zhou X."/>
            <person name="Zhu S.C."/>
            <person name="Zhu X."/>
            <person name="Smith H.O."/>
            <person name="Gibbs R.A."/>
            <person name="Myers E.W."/>
            <person name="Rubin G.M."/>
            <person name="Venter J.C."/>
        </authorList>
    </citation>
    <scope>NUCLEOTIDE SEQUENCE [LARGE SCALE GENOMIC DNA]</scope>
    <source>
        <strain>Berkeley</strain>
    </source>
</reference>
<reference key="3">
    <citation type="journal article" date="2002" name="Genome Biol.">
        <title>Annotation of the Drosophila melanogaster euchromatic genome: a systematic review.</title>
        <authorList>
            <person name="Misra S."/>
            <person name="Crosby M.A."/>
            <person name="Mungall C.J."/>
            <person name="Matthews B.B."/>
            <person name="Campbell K.S."/>
            <person name="Hradecky P."/>
            <person name="Huang Y."/>
            <person name="Kaminker J.S."/>
            <person name="Millburn G.H."/>
            <person name="Prochnik S.E."/>
            <person name="Smith C.D."/>
            <person name="Tupy J.L."/>
            <person name="Whitfield E.J."/>
            <person name="Bayraktaroglu L."/>
            <person name="Berman B.P."/>
            <person name="Bettencourt B.R."/>
            <person name="Celniker S.E."/>
            <person name="de Grey A.D.N.J."/>
            <person name="Drysdale R.A."/>
            <person name="Harris N.L."/>
            <person name="Richter J."/>
            <person name="Russo S."/>
            <person name="Schroeder A.J."/>
            <person name="Shu S.Q."/>
            <person name="Stapleton M."/>
            <person name="Yamada C."/>
            <person name="Ashburner M."/>
            <person name="Gelbart W.M."/>
            <person name="Rubin G.M."/>
            <person name="Lewis S.E."/>
        </authorList>
    </citation>
    <scope>GENOME REANNOTATION</scope>
    <source>
        <strain>Berkeley</strain>
    </source>
</reference>
<reference key="4">
    <citation type="journal article" date="2002" name="Genome Biol.">
        <title>A Drosophila full-length cDNA resource.</title>
        <authorList>
            <person name="Stapleton M."/>
            <person name="Carlson J.W."/>
            <person name="Brokstein P."/>
            <person name="Yu C."/>
            <person name="Champe M."/>
            <person name="George R.A."/>
            <person name="Guarin H."/>
            <person name="Kronmiller B."/>
            <person name="Pacleb J.M."/>
            <person name="Park S."/>
            <person name="Wan K.H."/>
            <person name="Rubin G.M."/>
            <person name="Celniker S.E."/>
        </authorList>
    </citation>
    <scope>NUCLEOTIDE SEQUENCE [LARGE SCALE MRNA]</scope>
    <source>
        <strain>Berkeley</strain>
        <tissue>Head</tissue>
    </source>
</reference>
<name>MOX12_DROME</name>
<gene>
    <name type="primary">olf413</name>
    <name type="ORF">CG12673</name>
</gene>